<reference key="1">
    <citation type="journal article" date="2008" name="Genome Biol.">
        <title>The complete genome, comparative and functional analysis of Stenotrophomonas maltophilia reveals an organism heavily shielded by drug resistance determinants.</title>
        <authorList>
            <person name="Crossman L.C."/>
            <person name="Gould V.C."/>
            <person name="Dow J.M."/>
            <person name="Vernikos G.S."/>
            <person name="Okazaki A."/>
            <person name="Sebaihia M."/>
            <person name="Saunders D."/>
            <person name="Arrowsmith C."/>
            <person name="Carver T."/>
            <person name="Peters N."/>
            <person name="Adlem E."/>
            <person name="Kerhornou A."/>
            <person name="Lord A."/>
            <person name="Murphy L."/>
            <person name="Seeger K."/>
            <person name="Squares R."/>
            <person name="Rutter S."/>
            <person name="Quail M.A."/>
            <person name="Rajandream M.A."/>
            <person name="Harris D."/>
            <person name="Churcher C."/>
            <person name="Bentley S.D."/>
            <person name="Parkhill J."/>
            <person name="Thomson N.R."/>
            <person name="Avison M.B."/>
        </authorList>
    </citation>
    <scope>NUCLEOTIDE SEQUENCE [LARGE SCALE GENOMIC DNA]</scope>
    <source>
        <strain>K279a</strain>
    </source>
</reference>
<feature type="chain" id="PRO_0000364723" description="Fructose-1,6-bisphosphatase class 1">
    <location>
        <begin position="1"/>
        <end position="338"/>
    </location>
</feature>
<feature type="binding site" evidence="1">
    <location>
        <position position="90"/>
    </location>
    <ligand>
        <name>Mg(2+)</name>
        <dbReference type="ChEBI" id="CHEBI:18420"/>
        <label>1</label>
    </ligand>
</feature>
<feature type="binding site" evidence="1">
    <location>
        <position position="112"/>
    </location>
    <ligand>
        <name>Mg(2+)</name>
        <dbReference type="ChEBI" id="CHEBI:18420"/>
        <label>1</label>
    </ligand>
</feature>
<feature type="binding site" evidence="1">
    <location>
        <position position="112"/>
    </location>
    <ligand>
        <name>Mg(2+)</name>
        <dbReference type="ChEBI" id="CHEBI:18420"/>
        <label>2</label>
    </ligand>
</feature>
<feature type="binding site" evidence="1">
    <location>
        <position position="114"/>
    </location>
    <ligand>
        <name>Mg(2+)</name>
        <dbReference type="ChEBI" id="CHEBI:18420"/>
        <label>1</label>
    </ligand>
</feature>
<feature type="binding site" evidence="1">
    <location>
        <begin position="115"/>
        <end position="118"/>
    </location>
    <ligand>
        <name>substrate</name>
    </ligand>
</feature>
<feature type="binding site" evidence="1">
    <location>
        <position position="115"/>
    </location>
    <ligand>
        <name>Mg(2+)</name>
        <dbReference type="ChEBI" id="CHEBI:18420"/>
        <label>2</label>
    </ligand>
</feature>
<feature type="binding site" evidence="1">
    <location>
        <position position="207"/>
    </location>
    <ligand>
        <name>substrate</name>
    </ligand>
</feature>
<feature type="binding site" evidence="1">
    <location>
        <position position="273"/>
    </location>
    <ligand>
        <name>substrate</name>
    </ligand>
</feature>
<feature type="binding site" evidence="1">
    <location>
        <position position="279"/>
    </location>
    <ligand>
        <name>Mg(2+)</name>
        <dbReference type="ChEBI" id="CHEBI:18420"/>
        <label>2</label>
    </ligand>
</feature>
<feature type="helix" evidence="2">
    <location>
        <begin position="6"/>
        <end position="15"/>
    </location>
</feature>
<feature type="helix" evidence="2">
    <location>
        <begin position="21"/>
        <end position="42"/>
    </location>
</feature>
<feature type="helix" evidence="2">
    <location>
        <begin position="43"/>
        <end position="47"/>
    </location>
</feature>
<feature type="helix" evidence="2">
    <location>
        <begin position="60"/>
        <end position="75"/>
    </location>
</feature>
<feature type="helix" evidence="2">
    <location>
        <begin position="77"/>
        <end position="80"/>
    </location>
</feature>
<feature type="strand" evidence="2">
    <location>
        <begin position="84"/>
        <end position="89"/>
    </location>
</feature>
<feature type="strand" evidence="2">
    <location>
        <begin position="92"/>
        <end position="94"/>
    </location>
</feature>
<feature type="strand" evidence="2">
    <location>
        <begin position="100"/>
        <end position="102"/>
    </location>
</feature>
<feature type="strand" evidence="2">
    <location>
        <begin position="106"/>
        <end position="116"/>
    </location>
</feature>
<feature type="helix" evidence="2">
    <location>
        <begin position="117"/>
        <end position="119"/>
    </location>
</feature>
<feature type="turn" evidence="2">
    <location>
        <begin position="120"/>
        <end position="123"/>
    </location>
</feature>
<feature type="strand" evidence="2">
    <location>
        <begin position="126"/>
        <end position="134"/>
    </location>
</feature>
<feature type="helix" evidence="2">
    <location>
        <begin position="144"/>
        <end position="147"/>
    </location>
</feature>
<feature type="helix" evidence="2">
    <location>
        <begin position="151"/>
        <end position="153"/>
    </location>
</feature>
<feature type="strand" evidence="2">
    <location>
        <begin position="155"/>
        <end position="174"/>
    </location>
</feature>
<feature type="strand" evidence="2">
    <location>
        <begin position="176"/>
        <end position="182"/>
    </location>
</feature>
<feature type="turn" evidence="2">
    <location>
        <begin position="183"/>
        <end position="186"/>
    </location>
</feature>
<feature type="strand" evidence="2">
    <location>
        <begin position="187"/>
        <end position="194"/>
    </location>
</feature>
<feature type="strand" evidence="2">
    <location>
        <begin position="202"/>
        <end position="205"/>
    </location>
</feature>
<feature type="helix" evidence="2">
    <location>
        <begin position="208"/>
        <end position="213"/>
    </location>
</feature>
<feature type="helix" evidence="2">
    <location>
        <begin position="216"/>
        <end position="227"/>
    </location>
</feature>
<feature type="helix" evidence="2">
    <location>
        <begin position="228"/>
        <end position="230"/>
    </location>
</feature>
<feature type="strand" evidence="2">
    <location>
        <begin position="238"/>
        <end position="241"/>
    </location>
</feature>
<feature type="helix" evidence="2">
    <location>
        <begin position="245"/>
        <end position="255"/>
    </location>
</feature>
<feature type="strand" evidence="2">
    <location>
        <begin position="258"/>
        <end position="261"/>
    </location>
</feature>
<feature type="strand" evidence="2">
    <location>
        <begin position="273"/>
        <end position="275"/>
    </location>
</feature>
<feature type="turn" evidence="2">
    <location>
        <begin position="276"/>
        <end position="279"/>
    </location>
</feature>
<feature type="helix" evidence="2">
    <location>
        <begin position="280"/>
        <end position="289"/>
    </location>
</feature>
<feature type="strand" evidence="2">
    <location>
        <begin position="293"/>
        <end position="295"/>
    </location>
</feature>
<feature type="strand" evidence="2">
    <location>
        <begin position="297"/>
        <end position="300"/>
    </location>
</feature>
<feature type="helix" evidence="2">
    <location>
        <begin position="301"/>
        <end position="303"/>
    </location>
</feature>
<feature type="strand" evidence="2">
    <location>
        <begin position="315"/>
        <end position="318"/>
    </location>
</feature>
<feature type="helix" evidence="2">
    <location>
        <begin position="320"/>
        <end position="334"/>
    </location>
</feature>
<sequence>MSRTSLTRFLIQEQHAGRINADLRQLIAVVARACTSISIAVSKGALGGVLGDAGTGNVQGEAQKKLDVISNEILLEANAWGGHLAACASEEMDHSQPVPDIYPRGDFLLLFDPLDGSSNIDVNVSVGTIFSVLRCPTNVELPGDDAFLQPGSKQIAAGYCIYGPSTQLVLTVGHGTHAFTLDREKGEFVLTTENMQIPAATQEFAINMSNQRHWEAPMQAYVGDLLAGKEGTRGKNFNMRWIASMVADVHRILTRGGIFIYPWDKKDPSKAGKLRLMYEANPMGLLVEQAGGAAWTGRERILDIQPDQLHQRVPVFLGSREEVAEAVRYHHAHDNAQG</sequence>
<protein>
    <recommendedName>
        <fullName evidence="1">Fructose-1,6-bisphosphatase class 1</fullName>
        <shortName evidence="1">FBPase class 1</shortName>
        <ecNumber evidence="1">3.1.3.11</ecNumber>
    </recommendedName>
    <alternativeName>
        <fullName evidence="1">D-fructose-1,6-bisphosphate 1-phosphohydrolase class 1</fullName>
    </alternativeName>
</protein>
<proteinExistence type="evidence at protein level"/>
<accession>B2FU10</accession>
<organism>
    <name type="scientific">Stenotrophomonas maltophilia (strain K279a)</name>
    <dbReference type="NCBI Taxonomy" id="522373"/>
    <lineage>
        <taxon>Bacteria</taxon>
        <taxon>Pseudomonadati</taxon>
        <taxon>Pseudomonadota</taxon>
        <taxon>Gammaproteobacteria</taxon>
        <taxon>Lysobacterales</taxon>
        <taxon>Lysobacteraceae</taxon>
        <taxon>Stenotrophomonas</taxon>
        <taxon>Stenotrophomonas maltophilia group</taxon>
    </lineage>
</organism>
<keyword id="KW-0002">3D-structure</keyword>
<keyword id="KW-0119">Carbohydrate metabolism</keyword>
<keyword id="KW-0963">Cytoplasm</keyword>
<keyword id="KW-0378">Hydrolase</keyword>
<keyword id="KW-0460">Magnesium</keyword>
<keyword id="KW-0479">Metal-binding</keyword>
<keyword id="KW-1185">Reference proteome</keyword>
<gene>
    <name evidence="1" type="primary">fbp</name>
    <name type="ordered locus">Smlt0047</name>
</gene>
<evidence type="ECO:0000255" key="1">
    <source>
        <dbReference type="HAMAP-Rule" id="MF_01855"/>
    </source>
</evidence>
<evidence type="ECO:0007829" key="2">
    <source>
        <dbReference type="PDB" id="7K74"/>
    </source>
</evidence>
<comment type="catalytic activity">
    <reaction evidence="1">
        <text>beta-D-fructose 1,6-bisphosphate + H2O = beta-D-fructose 6-phosphate + phosphate</text>
        <dbReference type="Rhea" id="RHEA:11064"/>
        <dbReference type="ChEBI" id="CHEBI:15377"/>
        <dbReference type="ChEBI" id="CHEBI:32966"/>
        <dbReference type="ChEBI" id="CHEBI:43474"/>
        <dbReference type="ChEBI" id="CHEBI:57634"/>
        <dbReference type="EC" id="3.1.3.11"/>
    </reaction>
</comment>
<comment type="cofactor">
    <cofactor evidence="1">
        <name>Mg(2+)</name>
        <dbReference type="ChEBI" id="CHEBI:18420"/>
    </cofactor>
    <text evidence="1">Binds 2 magnesium ions per subunit.</text>
</comment>
<comment type="pathway">
    <text evidence="1">Carbohydrate biosynthesis; gluconeogenesis.</text>
</comment>
<comment type="subunit">
    <text evidence="1">Homotetramer.</text>
</comment>
<comment type="subcellular location">
    <subcellularLocation>
        <location evidence="1">Cytoplasm</location>
    </subcellularLocation>
</comment>
<comment type="similarity">
    <text evidence="1">Belongs to the FBPase class 1 family.</text>
</comment>
<name>F16PA_STRMK</name>
<dbReference type="EC" id="3.1.3.11" evidence="1"/>
<dbReference type="EMBL" id="AM743169">
    <property type="protein sequence ID" value="CAQ43662.1"/>
    <property type="molecule type" value="Genomic_DNA"/>
</dbReference>
<dbReference type="RefSeq" id="WP_012478654.1">
    <property type="nucleotide sequence ID" value="NC_010943.1"/>
</dbReference>
<dbReference type="PDB" id="7K74">
    <property type="method" value="X-ray"/>
    <property type="resolution" value="2.20 A"/>
    <property type="chains" value="A/B/C/D=6-338"/>
</dbReference>
<dbReference type="PDBsum" id="7K74"/>
<dbReference type="SMR" id="B2FU10"/>
<dbReference type="EnsemblBacteria" id="CAQ43662">
    <property type="protein sequence ID" value="CAQ43662"/>
    <property type="gene ID" value="Smlt0047"/>
</dbReference>
<dbReference type="KEGG" id="sml:Smlt0047"/>
<dbReference type="PATRIC" id="fig|522373.3.peg.39"/>
<dbReference type="eggNOG" id="COG0158">
    <property type="taxonomic scope" value="Bacteria"/>
</dbReference>
<dbReference type="HOGENOM" id="CLU_039977_0_0_6"/>
<dbReference type="UniPathway" id="UPA00138"/>
<dbReference type="Proteomes" id="UP000008840">
    <property type="component" value="Chromosome"/>
</dbReference>
<dbReference type="GO" id="GO:0005829">
    <property type="term" value="C:cytosol"/>
    <property type="evidence" value="ECO:0007669"/>
    <property type="project" value="TreeGrafter"/>
</dbReference>
<dbReference type="GO" id="GO:0042132">
    <property type="term" value="F:fructose 1,6-bisphosphate 1-phosphatase activity"/>
    <property type="evidence" value="ECO:0007669"/>
    <property type="project" value="UniProtKB-UniRule"/>
</dbReference>
<dbReference type="GO" id="GO:0000287">
    <property type="term" value="F:magnesium ion binding"/>
    <property type="evidence" value="ECO:0007669"/>
    <property type="project" value="UniProtKB-UniRule"/>
</dbReference>
<dbReference type="GO" id="GO:0030388">
    <property type="term" value="P:fructose 1,6-bisphosphate metabolic process"/>
    <property type="evidence" value="ECO:0007669"/>
    <property type="project" value="TreeGrafter"/>
</dbReference>
<dbReference type="GO" id="GO:0006002">
    <property type="term" value="P:fructose 6-phosphate metabolic process"/>
    <property type="evidence" value="ECO:0007669"/>
    <property type="project" value="TreeGrafter"/>
</dbReference>
<dbReference type="GO" id="GO:0006000">
    <property type="term" value="P:fructose metabolic process"/>
    <property type="evidence" value="ECO:0007669"/>
    <property type="project" value="TreeGrafter"/>
</dbReference>
<dbReference type="GO" id="GO:0006094">
    <property type="term" value="P:gluconeogenesis"/>
    <property type="evidence" value="ECO:0007669"/>
    <property type="project" value="UniProtKB-UniRule"/>
</dbReference>
<dbReference type="GO" id="GO:0005986">
    <property type="term" value="P:sucrose biosynthetic process"/>
    <property type="evidence" value="ECO:0007669"/>
    <property type="project" value="TreeGrafter"/>
</dbReference>
<dbReference type="CDD" id="cd00354">
    <property type="entry name" value="FBPase"/>
    <property type="match status" value="1"/>
</dbReference>
<dbReference type="FunFam" id="3.30.540.10:FF:000006">
    <property type="entry name" value="Fructose-1,6-bisphosphatase class 1"/>
    <property type="match status" value="1"/>
</dbReference>
<dbReference type="FunFam" id="3.40.190.80:FF:000011">
    <property type="entry name" value="Fructose-1,6-bisphosphatase class 1"/>
    <property type="match status" value="1"/>
</dbReference>
<dbReference type="Gene3D" id="3.40.190.80">
    <property type="match status" value="1"/>
</dbReference>
<dbReference type="Gene3D" id="3.30.540.10">
    <property type="entry name" value="Fructose-1,6-Bisphosphatase, subunit A, domain 1"/>
    <property type="match status" value="1"/>
</dbReference>
<dbReference type="HAMAP" id="MF_01855">
    <property type="entry name" value="FBPase_class1"/>
    <property type="match status" value="1"/>
</dbReference>
<dbReference type="InterPro" id="IPR044015">
    <property type="entry name" value="FBPase_C_dom"/>
</dbReference>
<dbReference type="InterPro" id="IPR000146">
    <property type="entry name" value="FBPase_class-1"/>
</dbReference>
<dbReference type="InterPro" id="IPR033391">
    <property type="entry name" value="FBPase_N"/>
</dbReference>
<dbReference type="InterPro" id="IPR028343">
    <property type="entry name" value="FBPtase"/>
</dbReference>
<dbReference type="NCBIfam" id="NF006779">
    <property type="entry name" value="PRK09293.1-3"/>
    <property type="match status" value="1"/>
</dbReference>
<dbReference type="NCBIfam" id="NF006780">
    <property type="entry name" value="PRK09293.1-4"/>
    <property type="match status" value="1"/>
</dbReference>
<dbReference type="PANTHER" id="PTHR11556">
    <property type="entry name" value="FRUCTOSE-1,6-BISPHOSPHATASE-RELATED"/>
    <property type="match status" value="1"/>
</dbReference>
<dbReference type="PANTHER" id="PTHR11556:SF35">
    <property type="entry name" value="SEDOHEPTULOSE-1,7-BISPHOSPHATASE, CHLOROPLASTIC"/>
    <property type="match status" value="1"/>
</dbReference>
<dbReference type="Pfam" id="PF00316">
    <property type="entry name" value="FBPase"/>
    <property type="match status" value="1"/>
</dbReference>
<dbReference type="Pfam" id="PF18913">
    <property type="entry name" value="FBPase_C"/>
    <property type="match status" value="1"/>
</dbReference>
<dbReference type="PIRSF" id="PIRSF500210">
    <property type="entry name" value="FBPtase"/>
    <property type="match status" value="1"/>
</dbReference>
<dbReference type="PIRSF" id="PIRSF000904">
    <property type="entry name" value="FBPtase_SBPase"/>
    <property type="match status" value="1"/>
</dbReference>
<dbReference type="PRINTS" id="PR00115">
    <property type="entry name" value="F16BPHPHTASE"/>
</dbReference>
<dbReference type="SUPFAM" id="SSF56655">
    <property type="entry name" value="Carbohydrate phosphatase"/>
    <property type="match status" value="1"/>
</dbReference>